<sequence>MEHRLWGGRFSEPTAAEMRRFNDSFHFDVRLAEVDIAGSIAWAGALLQAGLINETEHADLVRGLELVRAEFANGSFVAAAGDEDIHTAVERRLRELIGDAALKLHTGRSRNDQVATDMRLYTIGIARQLDRRLRDLQLALLAQAEQHTATVMPGYTHLQRAQPITFGHWCLAYVEMFARDRSRLNDAIRRMRVLPLGAGALAGNSLGVERERLTELLDEFDELSANSLDAVSDRDFVAEVLFACALIGVHLSRLAEDVILYASAEFGFLELADAYSTGSSLMPQKKNPDSMELLRGKSGRLLGNLVALLTVLKGLPLTYNKDMQEDKEPLFDSFDTLDLGLQVAAAAIATMTVRPERMAAALDDAMLATDLADELVRRGVPFRVAHSKVGQLVQRALTRGVSLRQLPLADYQAVEPSLDASIYDVFDMQRSVAQKASYGGTAPQRVREQCARWRDSLLNDE</sequence>
<accession>A9WJR8</accession>
<organism>
    <name type="scientific">Chloroflexus aurantiacus (strain ATCC 29366 / DSM 635 / J-10-fl)</name>
    <dbReference type="NCBI Taxonomy" id="324602"/>
    <lineage>
        <taxon>Bacteria</taxon>
        <taxon>Bacillati</taxon>
        <taxon>Chloroflexota</taxon>
        <taxon>Chloroflexia</taxon>
        <taxon>Chloroflexales</taxon>
        <taxon>Chloroflexineae</taxon>
        <taxon>Chloroflexaceae</taxon>
        <taxon>Chloroflexus</taxon>
    </lineage>
</organism>
<protein>
    <recommendedName>
        <fullName evidence="1">Argininosuccinate lyase</fullName>
        <shortName evidence="1">ASAL</shortName>
        <ecNumber evidence="1">4.3.2.1</ecNumber>
    </recommendedName>
    <alternativeName>
        <fullName evidence="1">Arginosuccinase</fullName>
    </alternativeName>
</protein>
<comment type="catalytic activity">
    <reaction evidence="1">
        <text>2-(N(omega)-L-arginino)succinate = fumarate + L-arginine</text>
        <dbReference type="Rhea" id="RHEA:24020"/>
        <dbReference type="ChEBI" id="CHEBI:29806"/>
        <dbReference type="ChEBI" id="CHEBI:32682"/>
        <dbReference type="ChEBI" id="CHEBI:57472"/>
        <dbReference type="EC" id="4.3.2.1"/>
    </reaction>
</comment>
<comment type="pathway">
    <text evidence="1">Amino-acid biosynthesis; L-arginine biosynthesis; L-arginine from L-ornithine and carbamoyl phosphate: step 3/3.</text>
</comment>
<comment type="subcellular location">
    <subcellularLocation>
        <location evidence="1">Cytoplasm</location>
    </subcellularLocation>
</comment>
<comment type="similarity">
    <text evidence="1">Belongs to the lyase 1 family. Argininosuccinate lyase subfamily.</text>
</comment>
<feature type="chain" id="PRO_0000335823" description="Argininosuccinate lyase">
    <location>
        <begin position="1"/>
        <end position="461"/>
    </location>
</feature>
<name>ARLY_CHLAA</name>
<gene>
    <name evidence="1" type="primary">argH</name>
    <name type="ordered locus">Caur_3348</name>
</gene>
<evidence type="ECO:0000255" key="1">
    <source>
        <dbReference type="HAMAP-Rule" id="MF_00006"/>
    </source>
</evidence>
<reference key="1">
    <citation type="journal article" date="2011" name="BMC Genomics">
        <title>Complete genome sequence of the filamentous anoxygenic phototrophic bacterium Chloroflexus aurantiacus.</title>
        <authorList>
            <person name="Tang K.H."/>
            <person name="Barry K."/>
            <person name="Chertkov O."/>
            <person name="Dalin E."/>
            <person name="Han C.S."/>
            <person name="Hauser L.J."/>
            <person name="Honchak B.M."/>
            <person name="Karbach L.E."/>
            <person name="Land M.L."/>
            <person name="Lapidus A."/>
            <person name="Larimer F.W."/>
            <person name="Mikhailova N."/>
            <person name="Pitluck S."/>
            <person name="Pierson B.K."/>
            <person name="Blankenship R.E."/>
        </authorList>
    </citation>
    <scope>NUCLEOTIDE SEQUENCE [LARGE SCALE GENOMIC DNA]</scope>
    <source>
        <strain>ATCC 29366 / DSM 635 / J-10-fl</strain>
    </source>
</reference>
<dbReference type="EC" id="4.3.2.1" evidence="1"/>
<dbReference type="EMBL" id="CP000909">
    <property type="protein sequence ID" value="ABY36534.1"/>
    <property type="molecule type" value="Genomic_DNA"/>
</dbReference>
<dbReference type="RefSeq" id="WP_012259187.1">
    <property type="nucleotide sequence ID" value="NC_010175.1"/>
</dbReference>
<dbReference type="RefSeq" id="YP_001636923.1">
    <property type="nucleotide sequence ID" value="NC_010175.1"/>
</dbReference>
<dbReference type="SMR" id="A9WJR8"/>
<dbReference type="FunCoup" id="A9WJR8">
    <property type="interactions" value="415"/>
</dbReference>
<dbReference type="STRING" id="324602.Caur_3348"/>
<dbReference type="EnsemblBacteria" id="ABY36534">
    <property type="protein sequence ID" value="ABY36534"/>
    <property type="gene ID" value="Caur_3348"/>
</dbReference>
<dbReference type="KEGG" id="cau:Caur_3348"/>
<dbReference type="PATRIC" id="fig|324602.8.peg.3769"/>
<dbReference type="eggNOG" id="COG0165">
    <property type="taxonomic scope" value="Bacteria"/>
</dbReference>
<dbReference type="HOGENOM" id="CLU_027272_2_3_0"/>
<dbReference type="InParanoid" id="A9WJR8"/>
<dbReference type="UniPathway" id="UPA00068">
    <property type="reaction ID" value="UER00114"/>
</dbReference>
<dbReference type="Proteomes" id="UP000002008">
    <property type="component" value="Chromosome"/>
</dbReference>
<dbReference type="GO" id="GO:0005829">
    <property type="term" value="C:cytosol"/>
    <property type="evidence" value="ECO:0000318"/>
    <property type="project" value="GO_Central"/>
</dbReference>
<dbReference type="GO" id="GO:0004056">
    <property type="term" value="F:argininosuccinate lyase activity"/>
    <property type="evidence" value="ECO:0000318"/>
    <property type="project" value="GO_Central"/>
</dbReference>
<dbReference type="GO" id="GO:0042450">
    <property type="term" value="P:arginine biosynthetic process via ornithine"/>
    <property type="evidence" value="ECO:0000318"/>
    <property type="project" value="GO_Central"/>
</dbReference>
<dbReference type="GO" id="GO:0006526">
    <property type="term" value="P:L-arginine biosynthetic process"/>
    <property type="evidence" value="ECO:0007669"/>
    <property type="project" value="UniProtKB-UniRule"/>
</dbReference>
<dbReference type="CDD" id="cd01359">
    <property type="entry name" value="Argininosuccinate_lyase"/>
    <property type="match status" value="1"/>
</dbReference>
<dbReference type="FunFam" id="1.10.275.10:FF:000002">
    <property type="entry name" value="Argininosuccinate lyase"/>
    <property type="match status" value="1"/>
</dbReference>
<dbReference type="FunFam" id="1.10.40.30:FF:000001">
    <property type="entry name" value="Argininosuccinate lyase"/>
    <property type="match status" value="1"/>
</dbReference>
<dbReference type="FunFam" id="1.20.200.10:FF:000002">
    <property type="entry name" value="Argininosuccinate lyase"/>
    <property type="match status" value="1"/>
</dbReference>
<dbReference type="Gene3D" id="1.10.40.30">
    <property type="entry name" value="Fumarase/aspartase (C-terminal domain)"/>
    <property type="match status" value="1"/>
</dbReference>
<dbReference type="Gene3D" id="1.20.200.10">
    <property type="entry name" value="Fumarase/aspartase (Central domain)"/>
    <property type="match status" value="1"/>
</dbReference>
<dbReference type="Gene3D" id="1.10.275.10">
    <property type="entry name" value="Fumarase/aspartase (N-terminal domain)"/>
    <property type="match status" value="1"/>
</dbReference>
<dbReference type="HAMAP" id="MF_00006">
    <property type="entry name" value="Arg_succ_lyase"/>
    <property type="match status" value="1"/>
</dbReference>
<dbReference type="InterPro" id="IPR029419">
    <property type="entry name" value="Arg_succ_lyase_C"/>
</dbReference>
<dbReference type="InterPro" id="IPR009049">
    <property type="entry name" value="Argininosuccinate_lyase"/>
</dbReference>
<dbReference type="InterPro" id="IPR024083">
    <property type="entry name" value="Fumarase/histidase_N"/>
</dbReference>
<dbReference type="InterPro" id="IPR020557">
    <property type="entry name" value="Fumarate_lyase_CS"/>
</dbReference>
<dbReference type="InterPro" id="IPR000362">
    <property type="entry name" value="Fumarate_lyase_fam"/>
</dbReference>
<dbReference type="InterPro" id="IPR022761">
    <property type="entry name" value="Fumarate_lyase_N"/>
</dbReference>
<dbReference type="InterPro" id="IPR008948">
    <property type="entry name" value="L-Aspartase-like"/>
</dbReference>
<dbReference type="NCBIfam" id="TIGR00838">
    <property type="entry name" value="argH"/>
    <property type="match status" value="1"/>
</dbReference>
<dbReference type="PANTHER" id="PTHR43814">
    <property type="entry name" value="ARGININOSUCCINATE LYASE"/>
    <property type="match status" value="1"/>
</dbReference>
<dbReference type="PANTHER" id="PTHR43814:SF1">
    <property type="entry name" value="ARGININOSUCCINATE LYASE"/>
    <property type="match status" value="1"/>
</dbReference>
<dbReference type="Pfam" id="PF14698">
    <property type="entry name" value="ASL_C2"/>
    <property type="match status" value="1"/>
</dbReference>
<dbReference type="Pfam" id="PF00206">
    <property type="entry name" value="Lyase_1"/>
    <property type="match status" value="1"/>
</dbReference>
<dbReference type="PRINTS" id="PR00145">
    <property type="entry name" value="ARGSUCLYASE"/>
</dbReference>
<dbReference type="PRINTS" id="PR00149">
    <property type="entry name" value="FUMRATELYASE"/>
</dbReference>
<dbReference type="SUPFAM" id="SSF48557">
    <property type="entry name" value="L-aspartase-like"/>
    <property type="match status" value="1"/>
</dbReference>
<dbReference type="PROSITE" id="PS00163">
    <property type="entry name" value="FUMARATE_LYASES"/>
    <property type="match status" value="1"/>
</dbReference>
<keyword id="KW-0028">Amino-acid biosynthesis</keyword>
<keyword id="KW-0055">Arginine biosynthesis</keyword>
<keyword id="KW-0963">Cytoplasm</keyword>
<keyword id="KW-0456">Lyase</keyword>
<keyword id="KW-1185">Reference proteome</keyword>
<proteinExistence type="inferred from homology"/>